<keyword id="KW-0963">Cytoplasm</keyword>
<keyword id="KW-0255">Endonuclease</keyword>
<keyword id="KW-0378">Hydrolase</keyword>
<keyword id="KW-0479">Metal-binding</keyword>
<keyword id="KW-0540">Nuclease</keyword>
<keyword id="KW-0690">Ribosome biogenesis</keyword>
<keyword id="KW-0698">rRNA processing</keyword>
<keyword id="KW-0862">Zinc</keyword>
<sequence>MSQVILDLQLACADNSGLPDEATFQRWLEGVLPQFQEEAEVTIRLVDEAESNELNLTYRGMDKPTNVLSFPFEAPPGIELPLLGDLIICRQVVEREAAEQDKALEAHWAHMVVHGSLHLLGYDHIEDDEAEEMESLETEIMHGLGYPDPYLAEKDPL</sequence>
<accession>A8GB31</accession>
<reference key="1">
    <citation type="submission" date="2007-09" db="EMBL/GenBank/DDBJ databases">
        <title>Complete sequence of chromosome of Serratia proteamaculans 568.</title>
        <authorList>
            <consortium name="US DOE Joint Genome Institute"/>
            <person name="Copeland A."/>
            <person name="Lucas S."/>
            <person name="Lapidus A."/>
            <person name="Barry K."/>
            <person name="Glavina del Rio T."/>
            <person name="Dalin E."/>
            <person name="Tice H."/>
            <person name="Pitluck S."/>
            <person name="Chain P."/>
            <person name="Malfatti S."/>
            <person name="Shin M."/>
            <person name="Vergez L."/>
            <person name="Schmutz J."/>
            <person name="Larimer F."/>
            <person name="Land M."/>
            <person name="Hauser L."/>
            <person name="Kyrpides N."/>
            <person name="Kim E."/>
            <person name="Taghavi S."/>
            <person name="Newman L."/>
            <person name="Vangronsveld J."/>
            <person name="van der Lelie D."/>
            <person name="Richardson P."/>
        </authorList>
    </citation>
    <scope>NUCLEOTIDE SEQUENCE [LARGE SCALE GENOMIC DNA]</scope>
    <source>
        <strain>568</strain>
    </source>
</reference>
<comment type="function">
    <text evidence="1">Single strand-specific metallo-endoribonuclease involved in late-stage 70S ribosome quality control and in maturation of the 3' terminus of the 16S rRNA.</text>
</comment>
<comment type="cofactor">
    <cofactor evidence="1">
        <name>Zn(2+)</name>
        <dbReference type="ChEBI" id="CHEBI:29105"/>
    </cofactor>
    <text evidence="1">Binds 1 zinc ion.</text>
</comment>
<comment type="subcellular location">
    <subcellularLocation>
        <location evidence="1">Cytoplasm</location>
    </subcellularLocation>
</comment>
<comment type="similarity">
    <text evidence="1">Belongs to the endoribonuclease YbeY family.</text>
</comment>
<evidence type="ECO:0000255" key="1">
    <source>
        <dbReference type="HAMAP-Rule" id="MF_00009"/>
    </source>
</evidence>
<proteinExistence type="inferred from homology"/>
<organism>
    <name type="scientific">Serratia proteamaculans (strain 568)</name>
    <dbReference type="NCBI Taxonomy" id="399741"/>
    <lineage>
        <taxon>Bacteria</taxon>
        <taxon>Pseudomonadati</taxon>
        <taxon>Pseudomonadota</taxon>
        <taxon>Gammaproteobacteria</taxon>
        <taxon>Enterobacterales</taxon>
        <taxon>Yersiniaceae</taxon>
        <taxon>Serratia</taxon>
    </lineage>
</organism>
<gene>
    <name evidence="1" type="primary">ybeY</name>
    <name type="ordered locus">Spro_1217</name>
</gene>
<name>YBEY_SERP5</name>
<feature type="chain" id="PRO_1000057076" description="Endoribonuclease YbeY">
    <location>
        <begin position="1"/>
        <end position="157"/>
    </location>
</feature>
<feature type="binding site" evidence="1">
    <location>
        <position position="114"/>
    </location>
    <ligand>
        <name>Zn(2+)</name>
        <dbReference type="ChEBI" id="CHEBI:29105"/>
        <note>catalytic</note>
    </ligand>
</feature>
<feature type="binding site" evidence="1">
    <location>
        <position position="118"/>
    </location>
    <ligand>
        <name>Zn(2+)</name>
        <dbReference type="ChEBI" id="CHEBI:29105"/>
        <note>catalytic</note>
    </ligand>
</feature>
<feature type="binding site" evidence="1">
    <location>
        <position position="124"/>
    </location>
    <ligand>
        <name>Zn(2+)</name>
        <dbReference type="ChEBI" id="CHEBI:29105"/>
        <note>catalytic</note>
    </ligand>
</feature>
<protein>
    <recommendedName>
        <fullName evidence="1">Endoribonuclease YbeY</fullName>
        <ecNumber evidence="1">3.1.-.-</ecNumber>
    </recommendedName>
</protein>
<dbReference type="EC" id="3.1.-.-" evidence="1"/>
<dbReference type="EMBL" id="CP000826">
    <property type="protein sequence ID" value="ABV40321.1"/>
    <property type="molecule type" value="Genomic_DNA"/>
</dbReference>
<dbReference type="SMR" id="A8GB31"/>
<dbReference type="STRING" id="399741.Spro_1217"/>
<dbReference type="KEGG" id="spe:Spro_1217"/>
<dbReference type="eggNOG" id="COG0319">
    <property type="taxonomic scope" value="Bacteria"/>
</dbReference>
<dbReference type="HOGENOM" id="CLU_106710_0_1_6"/>
<dbReference type="OrthoDB" id="9807740at2"/>
<dbReference type="GO" id="GO:0005737">
    <property type="term" value="C:cytoplasm"/>
    <property type="evidence" value="ECO:0007669"/>
    <property type="project" value="UniProtKB-SubCell"/>
</dbReference>
<dbReference type="GO" id="GO:0004222">
    <property type="term" value="F:metalloendopeptidase activity"/>
    <property type="evidence" value="ECO:0007669"/>
    <property type="project" value="InterPro"/>
</dbReference>
<dbReference type="GO" id="GO:0004521">
    <property type="term" value="F:RNA endonuclease activity"/>
    <property type="evidence" value="ECO:0007669"/>
    <property type="project" value="UniProtKB-UniRule"/>
</dbReference>
<dbReference type="GO" id="GO:0008270">
    <property type="term" value="F:zinc ion binding"/>
    <property type="evidence" value="ECO:0007669"/>
    <property type="project" value="UniProtKB-UniRule"/>
</dbReference>
<dbReference type="GO" id="GO:0006364">
    <property type="term" value="P:rRNA processing"/>
    <property type="evidence" value="ECO:0007669"/>
    <property type="project" value="UniProtKB-UniRule"/>
</dbReference>
<dbReference type="Gene3D" id="3.40.390.30">
    <property type="entry name" value="Metalloproteases ('zincins'), catalytic domain"/>
    <property type="match status" value="1"/>
</dbReference>
<dbReference type="HAMAP" id="MF_00009">
    <property type="entry name" value="Endoribonucl_YbeY"/>
    <property type="match status" value="1"/>
</dbReference>
<dbReference type="InterPro" id="IPR023091">
    <property type="entry name" value="MetalPrtase_cat_dom_sf_prd"/>
</dbReference>
<dbReference type="InterPro" id="IPR002036">
    <property type="entry name" value="YbeY"/>
</dbReference>
<dbReference type="InterPro" id="IPR020549">
    <property type="entry name" value="YbeY_CS"/>
</dbReference>
<dbReference type="NCBIfam" id="TIGR00043">
    <property type="entry name" value="rRNA maturation RNase YbeY"/>
    <property type="match status" value="1"/>
</dbReference>
<dbReference type="PANTHER" id="PTHR46986">
    <property type="entry name" value="ENDORIBONUCLEASE YBEY, CHLOROPLASTIC"/>
    <property type="match status" value="1"/>
</dbReference>
<dbReference type="PANTHER" id="PTHR46986:SF1">
    <property type="entry name" value="ENDORIBONUCLEASE YBEY, CHLOROPLASTIC"/>
    <property type="match status" value="1"/>
</dbReference>
<dbReference type="Pfam" id="PF02130">
    <property type="entry name" value="YbeY"/>
    <property type="match status" value="1"/>
</dbReference>
<dbReference type="SUPFAM" id="SSF55486">
    <property type="entry name" value="Metalloproteases ('zincins'), catalytic domain"/>
    <property type="match status" value="1"/>
</dbReference>
<dbReference type="PROSITE" id="PS01306">
    <property type="entry name" value="UPF0054"/>
    <property type="match status" value="1"/>
</dbReference>